<accession>Q0I127</accession>
<feature type="chain" id="PRO_0000282046" description="23S rRNA (uracil(1939)-C(5))-methyltransferase RlmD">
    <location>
        <begin position="1"/>
        <end position="439"/>
    </location>
</feature>
<feature type="domain" description="TRAM" evidence="1">
    <location>
        <begin position="10"/>
        <end position="68"/>
    </location>
</feature>
<feature type="active site" description="Nucleophile" evidence="1">
    <location>
        <position position="395"/>
    </location>
</feature>
<feature type="binding site" evidence="1">
    <location>
        <position position="81"/>
    </location>
    <ligand>
        <name>[4Fe-4S] cluster</name>
        <dbReference type="ChEBI" id="CHEBI:49883"/>
    </ligand>
</feature>
<feature type="binding site" evidence="1">
    <location>
        <position position="87"/>
    </location>
    <ligand>
        <name>[4Fe-4S] cluster</name>
        <dbReference type="ChEBI" id="CHEBI:49883"/>
    </ligand>
</feature>
<feature type="binding site" evidence="1">
    <location>
        <position position="90"/>
    </location>
    <ligand>
        <name>[4Fe-4S] cluster</name>
        <dbReference type="ChEBI" id="CHEBI:49883"/>
    </ligand>
</feature>
<feature type="binding site" evidence="1">
    <location>
        <position position="168"/>
    </location>
    <ligand>
        <name>[4Fe-4S] cluster</name>
        <dbReference type="ChEBI" id="CHEBI:49883"/>
    </ligand>
</feature>
<feature type="binding site" evidence="1">
    <location>
        <position position="271"/>
    </location>
    <ligand>
        <name>S-adenosyl-L-methionine</name>
        <dbReference type="ChEBI" id="CHEBI:59789"/>
    </ligand>
</feature>
<feature type="binding site" evidence="1">
    <location>
        <position position="300"/>
    </location>
    <ligand>
        <name>S-adenosyl-L-methionine</name>
        <dbReference type="ChEBI" id="CHEBI:59789"/>
    </ligand>
</feature>
<feature type="binding site" evidence="1">
    <location>
        <position position="305"/>
    </location>
    <ligand>
        <name>S-adenosyl-L-methionine</name>
        <dbReference type="ChEBI" id="CHEBI:59789"/>
    </ligand>
</feature>
<feature type="binding site" evidence="1">
    <location>
        <position position="321"/>
    </location>
    <ligand>
        <name>S-adenosyl-L-methionine</name>
        <dbReference type="ChEBI" id="CHEBI:59789"/>
    </ligand>
</feature>
<feature type="binding site" evidence="1">
    <location>
        <position position="348"/>
    </location>
    <ligand>
        <name>S-adenosyl-L-methionine</name>
        <dbReference type="ChEBI" id="CHEBI:59789"/>
    </ligand>
</feature>
<feature type="binding site" evidence="1">
    <location>
        <position position="369"/>
    </location>
    <ligand>
        <name>S-adenosyl-L-methionine</name>
        <dbReference type="ChEBI" id="CHEBI:59789"/>
    </ligand>
</feature>
<evidence type="ECO:0000255" key="1">
    <source>
        <dbReference type="HAMAP-Rule" id="MF_01010"/>
    </source>
</evidence>
<dbReference type="EC" id="2.1.1.190" evidence="1"/>
<dbReference type="EMBL" id="CP000436">
    <property type="protein sequence ID" value="ABI24375.1"/>
    <property type="molecule type" value="Genomic_DNA"/>
</dbReference>
<dbReference type="SMR" id="Q0I127"/>
<dbReference type="KEGG" id="hso:HS_0094"/>
<dbReference type="eggNOG" id="COG2265">
    <property type="taxonomic scope" value="Bacteria"/>
</dbReference>
<dbReference type="HOGENOM" id="CLU_014689_8_2_6"/>
<dbReference type="GO" id="GO:0051539">
    <property type="term" value="F:4 iron, 4 sulfur cluster binding"/>
    <property type="evidence" value="ECO:0007669"/>
    <property type="project" value="UniProtKB-KW"/>
</dbReference>
<dbReference type="GO" id="GO:0005506">
    <property type="term" value="F:iron ion binding"/>
    <property type="evidence" value="ECO:0007669"/>
    <property type="project" value="UniProtKB-UniRule"/>
</dbReference>
<dbReference type="GO" id="GO:0003723">
    <property type="term" value="F:RNA binding"/>
    <property type="evidence" value="ECO:0007669"/>
    <property type="project" value="InterPro"/>
</dbReference>
<dbReference type="GO" id="GO:0070041">
    <property type="term" value="F:rRNA (uridine-C5-)-methyltransferase activity"/>
    <property type="evidence" value="ECO:0007669"/>
    <property type="project" value="UniProtKB-UniRule"/>
</dbReference>
<dbReference type="GO" id="GO:0070475">
    <property type="term" value="P:rRNA base methylation"/>
    <property type="evidence" value="ECO:0007669"/>
    <property type="project" value="TreeGrafter"/>
</dbReference>
<dbReference type="CDD" id="cd02440">
    <property type="entry name" value="AdoMet_MTases"/>
    <property type="match status" value="1"/>
</dbReference>
<dbReference type="FunFam" id="3.40.50.150:FF:000009">
    <property type="entry name" value="23S rRNA (Uracil(1939)-C(5))-methyltransferase RlmD"/>
    <property type="match status" value="1"/>
</dbReference>
<dbReference type="FunFam" id="2.40.50.140:FF:000097">
    <property type="entry name" value="23S rRNA (uracil(1939)-C(5))-methyltransferase RlmD"/>
    <property type="match status" value="1"/>
</dbReference>
<dbReference type="Gene3D" id="2.40.50.1070">
    <property type="match status" value="1"/>
</dbReference>
<dbReference type="Gene3D" id="2.40.50.140">
    <property type="entry name" value="Nucleic acid-binding proteins"/>
    <property type="match status" value="1"/>
</dbReference>
<dbReference type="Gene3D" id="3.40.50.150">
    <property type="entry name" value="Vaccinia Virus protein VP39"/>
    <property type="match status" value="1"/>
</dbReference>
<dbReference type="HAMAP" id="MF_01010">
    <property type="entry name" value="23SrRNA_methyltr_RlmD"/>
    <property type="match status" value="1"/>
</dbReference>
<dbReference type="InterPro" id="IPR001566">
    <property type="entry name" value="23S_rRNA_MeTrfase_RlmD"/>
</dbReference>
<dbReference type="InterPro" id="IPR030390">
    <property type="entry name" value="MeTrfase_TrmA_AS"/>
</dbReference>
<dbReference type="InterPro" id="IPR030391">
    <property type="entry name" value="MeTrfase_TrmA_CS"/>
</dbReference>
<dbReference type="InterPro" id="IPR012340">
    <property type="entry name" value="NA-bd_OB-fold"/>
</dbReference>
<dbReference type="InterPro" id="IPR029063">
    <property type="entry name" value="SAM-dependent_MTases_sf"/>
</dbReference>
<dbReference type="InterPro" id="IPR002792">
    <property type="entry name" value="TRAM_dom"/>
</dbReference>
<dbReference type="InterPro" id="IPR010280">
    <property type="entry name" value="U5_MeTrfase_fam"/>
</dbReference>
<dbReference type="NCBIfam" id="NF009639">
    <property type="entry name" value="PRK13168.1"/>
    <property type="match status" value="1"/>
</dbReference>
<dbReference type="NCBIfam" id="TIGR00479">
    <property type="entry name" value="rumA"/>
    <property type="match status" value="1"/>
</dbReference>
<dbReference type="PANTHER" id="PTHR11061:SF49">
    <property type="entry name" value="23S RRNA (URACIL(1939)-C(5))-METHYLTRANSFERASE RLMD"/>
    <property type="match status" value="1"/>
</dbReference>
<dbReference type="PANTHER" id="PTHR11061">
    <property type="entry name" value="RNA M5U METHYLTRANSFERASE"/>
    <property type="match status" value="1"/>
</dbReference>
<dbReference type="Pfam" id="PF01938">
    <property type="entry name" value="TRAM"/>
    <property type="match status" value="1"/>
</dbReference>
<dbReference type="Pfam" id="PF05958">
    <property type="entry name" value="tRNA_U5-meth_tr"/>
    <property type="match status" value="1"/>
</dbReference>
<dbReference type="SUPFAM" id="SSF50249">
    <property type="entry name" value="Nucleic acid-binding proteins"/>
    <property type="match status" value="1"/>
</dbReference>
<dbReference type="SUPFAM" id="SSF53335">
    <property type="entry name" value="S-adenosyl-L-methionine-dependent methyltransferases"/>
    <property type="match status" value="1"/>
</dbReference>
<dbReference type="PROSITE" id="PS51687">
    <property type="entry name" value="SAM_MT_RNA_M5U"/>
    <property type="match status" value="1"/>
</dbReference>
<dbReference type="PROSITE" id="PS50926">
    <property type="entry name" value="TRAM"/>
    <property type="match status" value="1"/>
</dbReference>
<dbReference type="PROSITE" id="PS01230">
    <property type="entry name" value="TRMA_1"/>
    <property type="match status" value="1"/>
</dbReference>
<dbReference type="PROSITE" id="PS01231">
    <property type="entry name" value="TRMA_2"/>
    <property type="match status" value="1"/>
</dbReference>
<reference key="1">
    <citation type="journal article" date="2007" name="J. Bacteriol.">
        <title>Complete genome sequence of Haemophilus somnus (Histophilus somni) strain 129Pt and comparison to Haemophilus ducreyi 35000HP and Haemophilus influenzae Rd.</title>
        <authorList>
            <person name="Challacombe J.F."/>
            <person name="Duncan A.J."/>
            <person name="Brettin T.S."/>
            <person name="Bruce D."/>
            <person name="Chertkov O."/>
            <person name="Detter J.C."/>
            <person name="Han C.S."/>
            <person name="Misra M."/>
            <person name="Richardson P."/>
            <person name="Tapia R."/>
            <person name="Thayer N."/>
            <person name="Xie G."/>
            <person name="Inzana T.J."/>
        </authorList>
    </citation>
    <scope>NUCLEOTIDE SEQUENCE [LARGE SCALE GENOMIC DNA]</scope>
    <source>
        <strain>129Pt</strain>
    </source>
</reference>
<proteinExistence type="inferred from homology"/>
<keyword id="KW-0004">4Fe-4S</keyword>
<keyword id="KW-0408">Iron</keyword>
<keyword id="KW-0411">Iron-sulfur</keyword>
<keyword id="KW-0479">Metal-binding</keyword>
<keyword id="KW-0489">Methyltransferase</keyword>
<keyword id="KW-0698">rRNA processing</keyword>
<keyword id="KW-0949">S-adenosyl-L-methionine</keyword>
<keyword id="KW-0808">Transferase</keyword>
<gene>
    <name evidence="1" type="primary">rlmD</name>
    <name type="synonym">rumA</name>
    <name type="ordered locus">HS_0094</name>
</gene>
<protein>
    <recommendedName>
        <fullName evidence="1">23S rRNA (uracil(1939)-C(5))-methyltransferase RlmD</fullName>
        <ecNumber evidence="1">2.1.1.190</ecNumber>
    </recommendedName>
    <alternativeName>
        <fullName evidence="1">23S rRNA(m5U1939)-methyltransferase</fullName>
    </alternativeName>
</protein>
<name>RLMD_HISS1</name>
<organism>
    <name type="scientific">Histophilus somni (strain 129Pt)</name>
    <name type="common">Haemophilus somnus</name>
    <dbReference type="NCBI Taxonomy" id="205914"/>
    <lineage>
        <taxon>Bacteria</taxon>
        <taxon>Pseudomonadati</taxon>
        <taxon>Pseudomonadota</taxon>
        <taxon>Gammaproteobacteria</taxon>
        <taxon>Pasteurellales</taxon>
        <taxon>Pasteurellaceae</taxon>
        <taxon>Histophilus</taxon>
    </lineage>
</organism>
<comment type="function">
    <text evidence="1">Catalyzes the formation of 5-methyl-uridine at position 1939 (m5U1939) in 23S rRNA.</text>
</comment>
<comment type="catalytic activity">
    <reaction evidence="1">
        <text>uridine(1939) in 23S rRNA + S-adenosyl-L-methionine = 5-methyluridine(1939) in 23S rRNA + S-adenosyl-L-homocysteine + H(+)</text>
        <dbReference type="Rhea" id="RHEA:42908"/>
        <dbReference type="Rhea" id="RHEA-COMP:10278"/>
        <dbReference type="Rhea" id="RHEA-COMP:10279"/>
        <dbReference type="ChEBI" id="CHEBI:15378"/>
        <dbReference type="ChEBI" id="CHEBI:57856"/>
        <dbReference type="ChEBI" id="CHEBI:59789"/>
        <dbReference type="ChEBI" id="CHEBI:65315"/>
        <dbReference type="ChEBI" id="CHEBI:74447"/>
        <dbReference type="EC" id="2.1.1.190"/>
    </reaction>
</comment>
<comment type="similarity">
    <text evidence="1">Belongs to the class I-like SAM-binding methyltransferase superfamily. RNA M5U methyltransferase family. RlmD subfamily.</text>
</comment>
<sequence>MVLLYQPKKQKKLRAAFTTIVQDLDYQGLGVAKIQGKTWFIENALPQEQVQVQVIEEKRQYGLGRVQKILQASPLRQTPRCAYYQICGGCQSQHIPIHLQRETKQKALFQRLTKLQKEAIEFMPMISGEAWHYRRRVRLSLYWDAKSKNLKIGFRQKNSQQIVNIRQCDVLDPLLNELLPKLHELLSTWSKPKTLGHIELVAADNGVAMLLRVTEKLAEHDRTLLLDFAFNHQVMLFVQDEKEICHLQGDLPYYQLDDGSILHFDIRDFIQVNRQLNQNMVNTALDWLDLKKKDNVLDLFCGMGNFTLPISRYVKSAVGIEGVLPMVEKARRNGERNHCHNVQFYQCDLSQSFTEQEWAKVPFDKILLDPPRSGAAFALNALCYLMAEKIVYVSCNPATLVRDVELLLKFGYQLKKVAMIDMFPHTSHLESISLFERNR</sequence>